<comment type="cofactor">
    <cofactor evidence="1">
        <name>Mg(2+)</name>
        <dbReference type="ChEBI" id="CHEBI:18420"/>
    </cofactor>
    <cofactor evidence="1">
        <name>Mn(2+)</name>
        <dbReference type="ChEBI" id="CHEBI:29035"/>
    </cofactor>
    <text evidence="1">Binds 2 magnesium or manganese ions per subunit.</text>
</comment>
<comment type="similarity">
    <text evidence="1">Belongs to the RimK family.</text>
</comment>
<name>RIMK1_SHESA</name>
<sequence length="301" mass="32400">MKIGILSQFPELYSTRRLVAACESRGHEAVVINTLNCYMNINSIKPSIHYQGQELTGFDAIIPRIHASVTFYGCAVVRQFEMMGVFAANDSISIARSRDKLRALQLLSRKGIGMPITGFANKPNDIPDLINMVGGAPLVIKLLEGTQGIGVVLAETKTAAESVIEAFLGLKANIMVQEYIKESNGSDIRCFVVGDKVVASMKRQGPEGDFRSNLHLGGCGEKVKITPAERKMAVAAVKAMGLVVAGVDILRSNRGPLILEVNSAPGIEGIEQTTGISVTEPIVEYIEKMVSARKSNRAVIA</sequence>
<gene>
    <name evidence="1" type="primary">rimK1</name>
    <name type="ordered locus">Shewana3_0545</name>
</gene>
<keyword id="KW-0067">ATP-binding</keyword>
<keyword id="KW-0436">Ligase</keyword>
<keyword id="KW-0460">Magnesium</keyword>
<keyword id="KW-0464">Manganese</keyword>
<keyword id="KW-0479">Metal-binding</keyword>
<keyword id="KW-0547">Nucleotide-binding</keyword>
<keyword id="KW-0648">Protein biosynthesis</keyword>
<accession>A0KSL6</accession>
<feature type="chain" id="PRO_0000340560" description="Probable alpha-L-glutamate ligase 1">
    <location>
        <begin position="1"/>
        <end position="301"/>
    </location>
</feature>
<feature type="domain" description="ATP-grasp" evidence="1">
    <location>
        <begin position="104"/>
        <end position="287"/>
    </location>
</feature>
<feature type="binding site" evidence="1">
    <location>
        <position position="141"/>
    </location>
    <ligand>
        <name>ATP</name>
        <dbReference type="ChEBI" id="CHEBI:30616"/>
    </ligand>
</feature>
<feature type="binding site" evidence="1">
    <location>
        <begin position="178"/>
        <end position="179"/>
    </location>
    <ligand>
        <name>ATP</name>
        <dbReference type="ChEBI" id="CHEBI:30616"/>
    </ligand>
</feature>
<feature type="binding site" evidence="1">
    <location>
        <position position="187"/>
    </location>
    <ligand>
        <name>ATP</name>
        <dbReference type="ChEBI" id="CHEBI:30616"/>
    </ligand>
</feature>
<feature type="binding site" evidence="1">
    <location>
        <begin position="211"/>
        <end position="213"/>
    </location>
    <ligand>
        <name>ATP</name>
        <dbReference type="ChEBI" id="CHEBI:30616"/>
    </ligand>
</feature>
<feature type="binding site" evidence="1">
    <location>
        <position position="248"/>
    </location>
    <ligand>
        <name>Mg(2+)</name>
        <dbReference type="ChEBI" id="CHEBI:18420"/>
        <label>1</label>
    </ligand>
</feature>
<feature type="binding site" evidence="1">
    <location>
        <position position="248"/>
    </location>
    <ligand>
        <name>Mn(2+)</name>
        <dbReference type="ChEBI" id="CHEBI:29035"/>
        <label>1</label>
    </ligand>
</feature>
<feature type="binding site" evidence="1">
    <location>
        <position position="260"/>
    </location>
    <ligand>
        <name>Mg(2+)</name>
        <dbReference type="ChEBI" id="CHEBI:18420"/>
        <label>1</label>
    </ligand>
</feature>
<feature type="binding site" evidence="1">
    <location>
        <position position="260"/>
    </location>
    <ligand>
        <name>Mg(2+)</name>
        <dbReference type="ChEBI" id="CHEBI:18420"/>
        <label>2</label>
    </ligand>
</feature>
<feature type="binding site" evidence="1">
    <location>
        <position position="260"/>
    </location>
    <ligand>
        <name>Mn(2+)</name>
        <dbReference type="ChEBI" id="CHEBI:29035"/>
        <label>1</label>
    </ligand>
</feature>
<feature type="binding site" evidence="1">
    <location>
        <position position="260"/>
    </location>
    <ligand>
        <name>Mn(2+)</name>
        <dbReference type="ChEBI" id="CHEBI:29035"/>
        <label>2</label>
    </ligand>
</feature>
<feature type="binding site" evidence="1">
    <location>
        <position position="262"/>
    </location>
    <ligand>
        <name>Mg(2+)</name>
        <dbReference type="ChEBI" id="CHEBI:18420"/>
        <label>2</label>
    </ligand>
</feature>
<feature type="binding site" evidence="1">
    <location>
        <position position="262"/>
    </location>
    <ligand>
        <name>Mn(2+)</name>
        <dbReference type="ChEBI" id="CHEBI:29035"/>
        <label>2</label>
    </ligand>
</feature>
<protein>
    <recommendedName>
        <fullName evidence="1">Probable alpha-L-glutamate ligase 1</fullName>
        <ecNumber evidence="1">6.3.2.-</ecNumber>
    </recommendedName>
</protein>
<reference key="1">
    <citation type="submission" date="2006-09" db="EMBL/GenBank/DDBJ databases">
        <title>Complete sequence of chromosome 1 of Shewanella sp. ANA-3.</title>
        <authorList>
            <person name="Copeland A."/>
            <person name="Lucas S."/>
            <person name="Lapidus A."/>
            <person name="Barry K."/>
            <person name="Detter J.C."/>
            <person name="Glavina del Rio T."/>
            <person name="Hammon N."/>
            <person name="Israni S."/>
            <person name="Dalin E."/>
            <person name="Tice H."/>
            <person name="Pitluck S."/>
            <person name="Chertkov O."/>
            <person name="Brettin T."/>
            <person name="Bruce D."/>
            <person name="Han C."/>
            <person name="Tapia R."/>
            <person name="Gilna P."/>
            <person name="Schmutz J."/>
            <person name="Larimer F."/>
            <person name="Land M."/>
            <person name="Hauser L."/>
            <person name="Kyrpides N."/>
            <person name="Kim E."/>
            <person name="Newman D."/>
            <person name="Salticov C."/>
            <person name="Konstantinidis K."/>
            <person name="Klappenback J."/>
            <person name="Tiedje J."/>
            <person name="Richardson P."/>
        </authorList>
    </citation>
    <scope>NUCLEOTIDE SEQUENCE [LARGE SCALE GENOMIC DNA]</scope>
    <source>
        <strain>ANA-3</strain>
    </source>
</reference>
<dbReference type="EC" id="6.3.2.-" evidence="1"/>
<dbReference type="EMBL" id="CP000469">
    <property type="protein sequence ID" value="ABK46785.1"/>
    <property type="molecule type" value="Genomic_DNA"/>
</dbReference>
<dbReference type="SMR" id="A0KSL6"/>
<dbReference type="STRING" id="94122.Shewana3_0545"/>
<dbReference type="KEGG" id="shn:Shewana3_0545"/>
<dbReference type="eggNOG" id="COG0189">
    <property type="taxonomic scope" value="Bacteria"/>
</dbReference>
<dbReference type="HOGENOM" id="CLU_054353_0_1_6"/>
<dbReference type="OrthoDB" id="3865600at2"/>
<dbReference type="Proteomes" id="UP000002589">
    <property type="component" value="Chromosome"/>
</dbReference>
<dbReference type="GO" id="GO:0005737">
    <property type="term" value="C:cytoplasm"/>
    <property type="evidence" value="ECO:0007669"/>
    <property type="project" value="TreeGrafter"/>
</dbReference>
<dbReference type="GO" id="GO:0005524">
    <property type="term" value="F:ATP binding"/>
    <property type="evidence" value="ECO:0007669"/>
    <property type="project" value="UniProtKB-UniRule"/>
</dbReference>
<dbReference type="GO" id="GO:0046872">
    <property type="term" value="F:metal ion binding"/>
    <property type="evidence" value="ECO:0007669"/>
    <property type="project" value="UniProtKB-KW"/>
</dbReference>
<dbReference type="GO" id="GO:0018169">
    <property type="term" value="F:ribosomal S6-glutamic acid ligase activity"/>
    <property type="evidence" value="ECO:0007669"/>
    <property type="project" value="TreeGrafter"/>
</dbReference>
<dbReference type="GO" id="GO:0036211">
    <property type="term" value="P:protein modification process"/>
    <property type="evidence" value="ECO:0007669"/>
    <property type="project" value="InterPro"/>
</dbReference>
<dbReference type="GO" id="GO:0009432">
    <property type="term" value="P:SOS response"/>
    <property type="evidence" value="ECO:0007669"/>
    <property type="project" value="TreeGrafter"/>
</dbReference>
<dbReference type="GO" id="GO:0006412">
    <property type="term" value="P:translation"/>
    <property type="evidence" value="ECO:0007669"/>
    <property type="project" value="UniProtKB-KW"/>
</dbReference>
<dbReference type="FunFam" id="3.40.50.20:FF:000004">
    <property type="entry name" value="Probable alpha-L-glutamate ligase"/>
    <property type="match status" value="1"/>
</dbReference>
<dbReference type="FunFam" id="3.30.1490.20:FF:000005">
    <property type="entry name" value="Probable alpha-L-glutamate ligase 1"/>
    <property type="match status" value="1"/>
</dbReference>
<dbReference type="Gene3D" id="3.40.50.20">
    <property type="match status" value="1"/>
</dbReference>
<dbReference type="Gene3D" id="3.30.1490.20">
    <property type="entry name" value="ATP-grasp fold, A domain"/>
    <property type="match status" value="1"/>
</dbReference>
<dbReference type="Gene3D" id="3.30.470.20">
    <property type="entry name" value="ATP-grasp fold, B domain"/>
    <property type="match status" value="1"/>
</dbReference>
<dbReference type="HAMAP" id="MF_01552">
    <property type="entry name" value="RimK"/>
    <property type="match status" value="1"/>
</dbReference>
<dbReference type="InterPro" id="IPR011761">
    <property type="entry name" value="ATP-grasp"/>
</dbReference>
<dbReference type="InterPro" id="IPR013651">
    <property type="entry name" value="ATP-grasp_RimK-type"/>
</dbReference>
<dbReference type="InterPro" id="IPR013815">
    <property type="entry name" value="ATP_grasp_subdomain_1"/>
</dbReference>
<dbReference type="InterPro" id="IPR023533">
    <property type="entry name" value="RimK"/>
</dbReference>
<dbReference type="InterPro" id="IPR041107">
    <property type="entry name" value="Rimk_N"/>
</dbReference>
<dbReference type="InterPro" id="IPR004666">
    <property type="entry name" value="Rp_bS6_RimK/Lys_biosynth_LsyX"/>
</dbReference>
<dbReference type="NCBIfam" id="NF007764">
    <property type="entry name" value="PRK10446.1"/>
    <property type="match status" value="1"/>
</dbReference>
<dbReference type="NCBIfam" id="TIGR00768">
    <property type="entry name" value="rimK_fam"/>
    <property type="match status" value="1"/>
</dbReference>
<dbReference type="PANTHER" id="PTHR21621:SF7">
    <property type="entry name" value="RIBOSOMAL PROTEIN BS6--L-GLUTAMATE LIGASE"/>
    <property type="match status" value="1"/>
</dbReference>
<dbReference type="PANTHER" id="PTHR21621">
    <property type="entry name" value="RIBOSOMAL PROTEIN S6 MODIFICATION PROTEIN"/>
    <property type="match status" value="1"/>
</dbReference>
<dbReference type="Pfam" id="PF08443">
    <property type="entry name" value="RimK"/>
    <property type="match status" value="1"/>
</dbReference>
<dbReference type="Pfam" id="PF18030">
    <property type="entry name" value="Rimk_N"/>
    <property type="match status" value="1"/>
</dbReference>
<dbReference type="SUPFAM" id="SSF56059">
    <property type="entry name" value="Glutathione synthetase ATP-binding domain-like"/>
    <property type="match status" value="1"/>
</dbReference>
<dbReference type="PROSITE" id="PS50975">
    <property type="entry name" value="ATP_GRASP"/>
    <property type="match status" value="1"/>
</dbReference>
<evidence type="ECO:0000255" key="1">
    <source>
        <dbReference type="HAMAP-Rule" id="MF_01552"/>
    </source>
</evidence>
<organism>
    <name type="scientific">Shewanella sp. (strain ANA-3)</name>
    <dbReference type="NCBI Taxonomy" id="94122"/>
    <lineage>
        <taxon>Bacteria</taxon>
        <taxon>Pseudomonadati</taxon>
        <taxon>Pseudomonadota</taxon>
        <taxon>Gammaproteobacteria</taxon>
        <taxon>Alteromonadales</taxon>
        <taxon>Shewanellaceae</taxon>
        <taxon>Shewanella</taxon>
    </lineage>
</organism>
<proteinExistence type="inferred from homology"/>